<proteinExistence type="evidence at transcript level"/>
<evidence type="ECO:0000250" key="1">
    <source>
        <dbReference type="UniProtKB" id="A0A0D4WTV1"/>
    </source>
</evidence>
<evidence type="ECO:0000250" key="2">
    <source>
        <dbReference type="UniProtKB" id="A0A0D4WV12"/>
    </source>
</evidence>
<evidence type="ECO:0000250" key="3">
    <source>
        <dbReference type="UniProtKB" id="P0CE80"/>
    </source>
</evidence>
<evidence type="ECO:0000250" key="4">
    <source>
        <dbReference type="UniProtKB" id="Q4ZFU2"/>
    </source>
</evidence>
<evidence type="ECO:0000250" key="5">
    <source>
        <dbReference type="UniProtKB" id="Q8I914"/>
    </source>
</evidence>
<evidence type="ECO:0000303" key="6">
    <source>
    </source>
</evidence>
<evidence type="ECO:0000305" key="7"/>
<evidence type="ECO:0000305" key="8">
    <source>
    </source>
</evidence>
<sequence length="274" mass="31584">WIMGHMVNGLEQVSEFLNLGANAIEFDIDFDQNGVAKITHHGIPCDCGRLCTKQTVFTEYLDNIRHVTTPGDPKFREQLILLALDLKLQRIPVEKAYAAGVDVATKLLDHYWQRGKSKARAYILLNLPLVQDYEFIRAFKDTLKNEGYEQHNDKVGVNFTGNEDLDETRKVLKKVGVDKHVWQADGITSCFARGTDRLTEALKRRDTPGYNYAYKVYAWTLVKYSTMRRLFRLGVDGVMSNFPDRVVEVLKEEEFADKFRMATYDDNPWKKFTG</sequence>
<feature type="chain" id="PRO_0000392902" description="Dermonecrotic toxin SdSicTox-betaIIB2ii">
    <location>
        <begin position="1" status="less than"/>
        <end position="274"/>
    </location>
</feature>
<feature type="active site" evidence="5">
    <location>
        <position position="5"/>
    </location>
</feature>
<feature type="active site" description="Nucleophile" evidence="5">
    <location>
        <position position="41"/>
    </location>
</feature>
<feature type="binding site" evidence="5">
    <location>
        <position position="25"/>
    </location>
    <ligand>
        <name>Mg(2+)</name>
        <dbReference type="ChEBI" id="CHEBI:18420"/>
    </ligand>
</feature>
<feature type="binding site" evidence="5">
    <location>
        <position position="27"/>
    </location>
    <ligand>
        <name>Mg(2+)</name>
        <dbReference type="ChEBI" id="CHEBI:18420"/>
    </ligand>
</feature>
<feature type="binding site" evidence="5">
    <location>
        <position position="85"/>
    </location>
    <ligand>
        <name>Mg(2+)</name>
        <dbReference type="ChEBI" id="CHEBI:18420"/>
    </ligand>
</feature>
<feature type="disulfide bond" evidence="3">
    <location>
        <begin position="45"/>
        <end position="51"/>
    </location>
</feature>
<feature type="disulfide bond" evidence="3">
    <location>
        <begin position="47"/>
        <end position="190"/>
    </location>
</feature>
<feature type="non-terminal residue">
    <location>
        <position position="1"/>
    </location>
</feature>
<reference key="1">
    <citation type="journal article" date="2009" name="Mol. Biol. Evol.">
        <title>Molecular evolution, functional variation, and proposed nomenclature of the gene family that includes sphingomyelinase D in sicariid spider venoms.</title>
        <authorList>
            <person name="Binford G.J."/>
            <person name="Bodner M.R."/>
            <person name="Cordes M.H."/>
            <person name="Baldwin K.L."/>
            <person name="Rynerson M.R."/>
            <person name="Burns S.N."/>
            <person name="Zobel-Thropp P.A."/>
        </authorList>
    </citation>
    <scope>NUCLEOTIDE SEQUENCE [MRNA]</scope>
    <scope>NOMENCLATURE</scope>
    <source>
        <tissue>Venom gland</tissue>
    </source>
</reference>
<comment type="function">
    <text evidence="1 3">Dermonecrotic toxins cleave the phosphodiester linkage between the phosphate and headgroup of certain phospholipids (sphingolipid and lysolipid substrates), forming an alcohol (often choline) and a cyclic phosphate (By similarity). This toxin acts on sphingomyelin (SM) (By similarity). It may also act on ceramide phosphoethanolamine (CPE), lysophosphatidylcholine (LPC) and lysophosphatidylethanolamine (LPE), but not on lysophosphatidylserine (LPS), and lysophosphatidylglycerol (LPG) (By similarity). It acts by transphosphatidylation, releasing exclusively cyclic phosphate products as second products (By similarity). Induces dermonecrosis, hemolysis, increased vascular permeability, edema, inflammatory response, and platelet aggregation (By similarity).</text>
</comment>
<comment type="catalytic activity">
    <reaction evidence="1">
        <text>an N-(acyl)-sphingosylphosphocholine = an N-(acyl)-sphingosyl-1,3-cyclic phosphate + choline</text>
        <dbReference type="Rhea" id="RHEA:60652"/>
        <dbReference type="ChEBI" id="CHEBI:15354"/>
        <dbReference type="ChEBI" id="CHEBI:64583"/>
        <dbReference type="ChEBI" id="CHEBI:143892"/>
    </reaction>
</comment>
<comment type="catalytic activity">
    <reaction evidence="1">
        <text>an N-(acyl)-sphingosylphosphoethanolamine = an N-(acyl)-sphingosyl-1,3-cyclic phosphate + ethanolamine</text>
        <dbReference type="Rhea" id="RHEA:60648"/>
        <dbReference type="ChEBI" id="CHEBI:57603"/>
        <dbReference type="ChEBI" id="CHEBI:143891"/>
        <dbReference type="ChEBI" id="CHEBI:143892"/>
    </reaction>
</comment>
<comment type="catalytic activity">
    <reaction evidence="1">
        <text>a 1-acyl-sn-glycero-3-phosphocholine = a 1-acyl-sn-glycero-2,3-cyclic phosphate + choline</text>
        <dbReference type="Rhea" id="RHEA:60700"/>
        <dbReference type="ChEBI" id="CHEBI:15354"/>
        <dbReference type="ChEBI" id="CHEBI:58168"/>
        <dbReference type="ChEBI" id="CHEBI:143947"/>
    </reaction>
</comment>
<comment type="catalytic activity">
    <reaction evidence="1">
        <text>a 1-acyl-sn-glycero-3-phosphoethanolamine = a 1-acyl-sn-glycero-2,3-cyclic phosphate + ethanolamine</text>
        <dbReference type="Rhea" id="RHEA:60704"/>
        <dbReference type="ChEBI" id="CHEBI:57603"/>
        <dbReference type="ChEBI" id="CHEBI:64381"/>
        <dbReference type="ChEBI" id="CHEBI:143947"/>
    </reaction>
</comment>
<comment type="cofactor">
    <cofactor evidence="5">
        <name>Mg(2+)</name>
        <dbReference type="ChEBI" id="CHEBI:18420"/>
    </cofactor>
    <text evidence="5">Binds 1 Mg(2+) ion per subunit.</text>
</comment>
<comment type="subcellular location">
    <subcellularLocation>
        <location evidence="8">Secreted</location>
    </subcellularLocation>
</comment>
<comment type="tissue specificity">
    <text evidence="8">Expressed by the venom gland.</text>
</comment>
<comment type="similarity">
    <text evidence="7">Belongs to the arthropod phospholipase D family. Class II subfamily.</text>
</comment>
<comment type="caution">
    <text evidence="1 2 4">The most common activity assay for dermonecrotic toxins detects enzymatic activity by monitoring choline release from substrate. Liberation of choline from sphingomyelin (SM) or lysophosphatidylcholine (LPC) is commonly assumed to result from substrate hydrolysis, giving either ceramide-1-phosphate (C1P) or lysophosphatidic acid (LPA), respectively, as a second product. However, two studies from Lajoie and colleagues (2013 and 2015) report the observation of exclusive formation of cyclic phosphate products as second products, resulting from intramolecular transphosphatidylation. Cyclic phosphates have vastly different biological properties from their monoester counterparts, and they may be relevant to the pathology of brown spider envenomation.</text>
</comment>
<keyword id="KW-0204">Cytolysis</keyword>
<keyword id="KW-1061">Dermonecrotic toxin</keyword>
<keyword id="KW-1015">Disulfide bond</keyword>
<keyword id="KW-0354">Hemolysis</keyword>
<keyword id="KW-0442">Lipid degradation</keyword>
<keyword id="KW-0443">Lipid metabolism</keyword>
<keyword id="KW-0456">Lyase</keyword>
<keyword id="KW-0460">Magnesium</keyword>
<keyword id="KW-0479">Metal-binding</keyword>
<keyword id="KW-0964">Secreted</keyword>
<keyword id="KW-0800">Toxin</keyword>
<protein>
    <recommendedName>
        <fullName evidence="6">Dermonecrotic toxin SdSicTox-betaIIB2ii</fullName>
        <ecNumber evidence="4">4.6.1.-</ecNumber>
    </recommendedName>
    <alternativeName>
        <fullName>Phospholipase D</fullName>
        <shortName>PLD</shortName>
    </alternativeName>
    <alternativeName>
        <fullName>Sphingomyelin phosphodiesterase D</fullName>
        <shortName>SMD</shortName>
        <shortName>SMase D</shortName>
        <shortName>Sphingomyelinase D</shortName>
    </alternativeName>
</protein>
<organism>
    <name type="scientific">Sicarius cf. damarensis (strain GJB-2008)</name>
    <name type="common">Six-eyed sand spider</name>
    <dbReference type="NCBI Taxonomy" id="575956"/>
    <lineage>
        <taxon>Eukaryota</taxon>
        <taxon>Metazoa</taxon>
        <taxon>Ecdysozoa</taxon>
        <taxon>Arthropoda</taxon>
        <taxon>Chelicerata</taxon>
        <taxon>Arachnida</taxon>
        <taxon>Araneae</taxon>
        <taxon>Araneomorphae</taxon>
        <taxon>Haplogynae</taxon>
        <taxon>Scytodoidea</taxon>
        <taxon>Sicariidae</taxon>
        <taxon>Sicarius</taxon>
    </lineage>
</organism>
<accession>C0JB90</accession>
<name>B2L2_SICCD</name>
<dbReference type="EC" id="4.6.1.-" evidence="4"/>
<dbReference type="EMBL" id="FJ171525">
    <property type="protein sequence ID" value="ACN49021.1"/>
    <property type="molecule type" value="mRNA"/>
</dbReference>
<dbReference type="SMR" id="C0JB90"/>
<dbReference type="GO" id="GO:0005576">
    <property type="term" value="C:extracellular region"/>
    <property type="evidence" value="ECO:0007669"/>
    <property type="project" value="UniProtKB-SubCell"/>
</dbReference>
<dbReference type="GO" id="GO:0016829">
    <property type="term" value="F:lyase activity"/>
    <property type="evidence" value="ECO:0007669"/>
    <property type="project" value="UniProtKB-KW"/>
</dbReference>
<dbReference type="GO" id="GO:0046872">
    <property type="term" value="F:metal ion binding"/>
    <property type="evidence" value="ECO:0007669"/>
    <property type="project" value="UniProtKB-KW"/>
</dbReference>
<dbReference type="GO" id="GO:0008081">
    <property type="term" value="F:phosphoric diester hydrolase activity"/>
    <property type="evidence" value="ECO:0007669"/>
    <property type="project" value="InterPro"/>
</dbReference>
<dbReference type="GO" id="GO:0090729">
    <property type="term" value="F:toxin activity"/>
    <property type="evidence" value="ECO:0007669"/>
    <property type="project" value="UniProtKB-KW"/>
</dbReference>
<dbReference type="GO" id="GO:0031640">
    <property type="term" value="P:killing of cells of another organism"/>
    <property type="evidence" value="ECO:0007669"/>
    <property type="project" value="UniProtKB-KW"/>
</dbReference>
<dbReference type="GO" id="GO:0016042">
    <property type="term" value="P:lipid catabolic process"/>
    <property type="evidence" value="ECO:0007669"/>
    <property type="project" value="UniProtKB-KW"/>
</dbReference>
<dbReference type="CDD" id="cd08576">
    <property type="entry name" value="GDPD_like_SMaseD_PLD"/>
    <property type="match status" value="1"/>
</dbReference>
<dbReference type="Gene3D" id="3.20.20.190">
    <property type="entry name" value="Phosphatidylinositol (PI) phosphodiesterase"/>
    <property type="match status" value="1"/>
</dbReference>
<dbReference type="InterPro" id="IPR017946">
    <property type="entry name" value="PLC-like_Pdiesterase_TIM-brl"/>
</dbReference>
<dbReference type="SUPFAM" id="SSF51695">
    <property type="entry name" value="PLC-like phosphodiesterases"/>
    <property type="match status" value="1"/>
</dbReference>